<accession>P40709</accession>
<proteinExistence type="evidence at protein level"/>
<comment type="subcellular location">
    <subcellularLocation>
        <location evidence="1">Cell inner membrane</location>
        <topology evidence="1">Multi-pass membrane protein</topology>
    </subcellularLocation>
</comment>
<comment type="similarity">
    <text evidence="3">To H.influenzae HI_0842.</text>
</comment>
<keyword id="KW-0002">3D-structure</keyword>
<keyword id="KW-0997">Cell inner membrane</keyword>
<keyword id="KW-1003">Cell membrane</keyword>
<keyword id="KW-0472">Membrane</keyword>
<keyword id="KW-1185">Reference proteome</keyword>
<keyword id="KW-0812">Transmembrane</keyword>
<keyword id="KW-1133">Transmembrane helix</keyword>
<organism>
    <name type="scientific">Salmonella typhimurium (strain LT2 / SGSC1412 / ATCC 700720)</name>
    <dbReference type="NCBI Taxonomy" id="99287"/>
    <lineage>
        <taxon>Bacteria</taxon>
        <taxon>Pseudomonadati</taxon>
        <taxon>Pseudomonadota</taxon>
        <taxon>Gammaproteobacteria</taxon>
        <taxon>Enterobacterales</taxon>
        <taxon>Enterobacteriaceae</taxon>
        <taxon>Salmonella</taxon>
    </lineage>
</organism>
<gene>
    <name type="primary">yejM</name>
    <name type="ordered locus">STM2228</name>
</gene>
<reference key="1">
    <citation type="journal article" date="2001" name="Nature">
        <title>Complete genome sequence of Salmonella enterica serovar Typhimurium LT2.</title>
        <authorList>
            <person name="McClelland M."/>
            <person name="Sanderson K.E."/>
            <person name="Spieth J."/>
            <person name="Clifton S.W."/>
            <person name="Latreille P."/>
            <person name="Courtney L."/>
            <person name="Porwollik S."/>
            <person name="Ali J."/>
            <person name="Dante M."/>
            <person name="Du F."/>
            <person name="Hou S."/>
            <person name="Layman D."/>
            <person name="Leonard S."/>
            <person name="Nguyen C."/>
            <person name="Scott K."/>
            <person name="Holmes A."/>
            <person name="Grewal N."/>
            <person name="Mulvaney E."/>
            <person name="Ryan E."/>
            <person name="Sun H."/>
            <person name="Florea L."/>
            <person name="Miller W."/>
            <person name="Stoneking T."/>
            <person name="Nhan M."/>
            <person name="Waterston R."/>
            <person name="Wilson R.K."/>
        </authorList>
    </citation>
    <scope>NUCLEOTIDE SEQUENCE [LARGE SCALE GENOMIC DNA]</scope>
    <source>
        <strain>LT2 / SGSC1412 / ATCC 700720</strain>
    </source>
</reference>
<reference key="2">
    <citation type="journal article" date="1992" name="Nucleic Acids Res.">
        <title>Insertion (sufB) in the anticodon loop or base substitution (sufC) in the anticodon stem of tRNA(Pro)2 from Salmonella typhimurium induces suppression of frameshift mutations.</title>
        <authorList>
            <person name="Sroga G.E."/>
            <person name="Nemoto F."/>
            <person name="Kuchino Y."/>
            <person name="Bjoerk G.R."/>
        </authorList>
    </citation>
    <scope>NUCLEOTIDE SEQUENCE [GENOMIC DNA] OF 397-586</scope>
</reference>
<feature type="chain" id="PRO_0000169169" description="Inner membrane protein YejM">
    <location>
        <begin position="1"/>
        <end position="586"/>
    </location>
</feature>
<feature type="topological domain" description="Cytoplasmic" evidence="2">
    <location>
        <begin position="1"/>
        <end position="20"/>
    </location>
</feature>
<feature type="transmembrane region" description="Helical" evidence="2">
    <location>
        <begin position="21"/>
        <end position="43"/>
    </location>
</feature>
<feature type="topological domain" description="Periplasmic" evidence="2">
    <location>
        <begin position="44"/>
        <end position="57"/>
    </location>
</feature>
<feature type="transmembrane region" description="Helical" evidence="2">
    <location>
        <begin position="58"/>
        <end position="80"/>
    </location>
</feature>
<feature type="topological domain" description="Cytoplasmic" evidence="2">
    <location>
        <begin position="81"/>
        <end position="84"/>
    </location>
</feature>
<feature type="transmembrane region" description="Helical" evidence="2">
    <location>
        <begin position="85"/>
        <end position="103"/>
    </location>
</feature>
<feature type="topological domain" description="Periplasmic" evidence="2">
    <location>
        <begin position="104"/>
        <end position="134"/>
    </location>
</feature>
<feature type="transmembrane region" description="Helical" evidence="2">
    <location>
        <begin position="135"/>
        <end position="157"/>
    </location>
</feature>
<feature type="topological domain" description="Cytoplasmic" evidence="2">
    <location>
        <begin position="158"/>
        <end position="168"/>
    </location>
</feature>
<feature type="transmembrane region" description="Helical" evidence="2">
    <location>
        <begin position="169"/>
        <end position="191"/>
    </location>
</feature>
<feature type="topological domain" description="Periplasmic" evidence="2">
    <location>
        <begin position="192"/>
        <end position="586"/>
    </location>
</feature>
<feature type="helix" evidence="5">
    <location>
        <begin position="9"/>
        <end position="33"/>
    </location>
</feature>
<feature type="helix" evidence="5">
    <location>
        <begin position="35"/>
        <end position="40"/>
    </location>
</feature>
<feature type="helix" evidence="5">
    <location>
        <begin position="49"/>
        <end position="71"/>
    </location>
</feature>
<feature type="helix" evidence="5">
    <location>
        <begin position="73"/>
        <end position="79"/>
    </location>
</feature>
<feature type="helix" evidence="5">
    <location>
        <begin position="83"/>
        <end position="111"/>
    </location>
</feature>
<feature type="helix" evidence="5">
    <location>
        <begin position="117"/>
        <end position="124"/>
    </location>
</feature>
<feature type="helix" evidence="5">
    <location>
        <begin position="133"/>
        <end position="158"/>
    </location>
</feature>
<feature type="turn" evidence="5">
    <location>
        <begin position="159"/>
        <end position="161"/>
    </location>
</feature>
<feature type="helix" evidence="5">
    <location>
        <begin position="171"/>
        <end position="193"/>
    </location>
</feature>
<feature type="helix" evidence="5">
    <location>
        <begin position="197"/>
        <end position="200"/>
    </location>
</feature>
<feature type="turn" evidence="5">
    <location>
        <begin position="201"/>
        <end position="205"/>
    </location>
</feature>
<feature type="helix" evidence="5">
    <location>
        <begin position="215"/>
        <end position="220"/>
    </location>
</feature>
<feature type="helix" evidence="5">
    <location>
        <begin position="228"/>
        <end position="236"/>
    </location>
</feature>
<feature type="strand" evidence="4">
    <location>
        <begin position="247"/>
        <end position="249"/>
    </location>
</feature>
<feature type="strand" evidence="4">
    <location>
        <begin position="253"/>
        <end position="256"/>
    </location>
</feature>
<feature type="strand" evidence="4">
    <location>
        <begin position="261"/>
        <end position="270"/>
    </location>
</feature>
<feature type="helix" evidence="4">
    <location>
        <begin position="275"/>
        <end position="278"/>
    </location>
</feature>
<feature type="helix" evidence="4">
    <location>
        <begin position="280"/>
        <end position="287"/>
    </location>
</feature>
<feature type="strand" evidence="4">
    <location>
        <begin position="289"/>
        <end position="296"/>
    </location>
</feature>
<feature type="helix" evidence="4">
    <location>
        <begin position="302"/>
        <end position="311"/>
    </location>
</feature>
<feature type="helix" evidence="4">
    <location>
        <begin position="315"/>
        <end position="317"/>
    </location>
</feature>
<feature type="helix" evidence="4">
    <location>
        <begin position="318"/>
        <end position="324"/>
    </location>
</feature>
<feature type="helix" evidence="4">
    <location>
        <begin position="329"/>
        <end position="336"/>
    </location>
</feature>
<feature type="strand" evidence="4">
    <location>
        <begin position="340"/>
        <end position="345"/>
    </location>
</feature>
<feature type="helix" evidence="4">
    <location>
        <begin position="352"/>
        <end position="356"/>
    </location>
</feature>
<feature type="turn" evidence="4">
    <location>
        <begin position="357"/>
        <end position="361"/>
    </location>
</feature>
<feature type="helix" evidence="4">
    <location>
        <begin position="372"/>
        <end position="385"/>
    </location>
</feature>
<feature type="strand" evidence="6">
    <location>
        <begin position="389"/>
        <end position="391"/>
    </location>
</feature>
<feature type="strand" evidence="4">
    <location>
        <begin position="393"/>
        <end position="399"/>
    </location>
</feature>
<feature type="turn" evidence="4">
    <location>
        <begin position="407"/>
        <end position="410"/>
    </location>
</feature>
<feature type="helix" evidence="4">
    <location>
        <begin position="412"/>
        <end position="436"/>
    </location>
</feature>
<feature type="helix" evidence="4">
    <location>
        <begin position="440"/>
        <end position="442"/>
    </location>
</feature>
<feature type="strand" evidence="4">
    <location>
        <begin position="443"/>
        <end position="452"/>
    </location>
</feature>
<feature type="helix" evidence="4">
    <location>
        <begin position="457"/>
        <end position="460"/>
    </location>
</feature>
<feature type="helix" evidence="4">
    <location>
        <begin position="466"/>
        <end position="469"/>
    </location>
</feature>
<feature type="strand" evidence="4">
    <location>
        <begin position="473"/>
        <end position="476"/>
    </location>
</feature>
<feature type="strand" evidence="4">
    <location>
        <begin position="483"/>
        <end position="485"/>
    </location>
</feature>
<feature type="helix" evidence="4">
    <location>
        <begin position="491"/>
        <end position="501"/>
    </location>
</feature>
<feature type="helix" evidence="4">
    <location>
        <begin position="509"/>
        <end position="511"/>
    </location>
</feature>
<feature type="strand" evidence="5">
    <location>
        <begin position="520"/>
        <end position="522"/>
    </location>
</feature>
<feature type="strand" evidence="4">
    <location>
        <begin position="528"/>
        <end position="531"/>
    </location>
</feature>
<feature type="strand" evidence="4">
    <location>
        <begin position="533"/>
        <end position="539"/>
    </location>
</feature>
<feature type="strand" evidence="4">
    <location>
        <begin position="544"/>
        <end position="548"/>
    </location>
</feature>
<feature type="strand" evidence="4">
    <location>
        <begin position="553"/>
        <end position="556"/>
    </location>
</feature>
<feature type="helix" evidence="4">
    <location>
        <begin position="570"/>
        <end position="580"/>
    </location>
</feature>
<feature type="helix" evidence="4">
    <location>
        <begin position="581"/>
        <end position="583"/>
    </location>
</feature>
<sequence>MVTHRQRYREKVSQMVSWGHWFALFNILLATLLGSRYLFVADWPTTLAGRIYSYLSIVGHFSFLVFATYLLILFPLTFIVMSQRLMRFLSAILATAGMTLLLIDSEVFTRFHLHLNPIVWELVINPDQNEMARDWQLMFISVPVILLIEMLFATWSWQKLRSLTRRRHFARPLAAFFFVSFIASHLIYIWADANFYRPITMQRANLPLSYPMTARRFLEKHGLLDAQEYQRRLVEQGNPEAVSVQYPLSNLHYRDMGTGQNVLLITVDGLNYSRFEKQMPELATFAEQNIDFTRHMSSGNTTDNGIFGLFYGISPGYMDGVLSTRTPAALITALNQQGYQLGLFSSDGFASPLYRQALLSDFSMPAAQTQSDAQTASQWIDWLGRYAQEDNRWFSWISFNGTNIDDSNQKNFVKRYASAASDVDAQINRVLNALREAGKFDNTVVIITAGRGIPLTPEENRFDWSQGHLQVPLVIHWPGTPAQRINVLTDHTDVMTTLMQRLLHVSTPANEYSQGQDIFTVPRRHNWVTAADGSTLAITTPQMTLVLNNNGHYQTYDLHGEKIKDQKPQLSLLLQVLTEEKRFIAN</sequence>
<name>YEJM_SALTY</name>
<protein>
    <recommendedName>
        <fullName>Inner membrane protein YejM</fullName>
    </recommendedName>
</protein>
<dbReference type="EMBL" id="AE006468">
    <property type="protein sequence ID" value="AAL21131.1"/>
    <property type="molecule type" value="Genomic_DNA"/>
</dbReference>
<dbReference type="EMBL" id="X63777">
    <property type="status" value="NOT_ANNOTATED_CDS"/>
    <property type="molecule type" value="Genomic_DNA"/>
</dbReference>
<dbReference type="RefSeq" id="NP_461172.1">
    <property type="nucleotide sequence ID" value="NC_003197.2"/>
</dbReference>
<dbReference type="RefSeq" id="WP_000256150.1">
    <property type="nucleotide sequence ID" value="NC_003197.2"/>
</dbReference>
<dbReference type="PDB" id="5I5D">
    <property type="method" value="X-ray"/>
    <property type="resolution" value="1.64 A"/>
    <property type="chains" value="A/B/C/D=1-586"/>
</dbReference>
<dbReference type="PDB" id="5I5F">
    <property type="method" value="X-ray"/>
    <property type="resolution" value="1.84 A"/>
    <property type="chains" value="A/B/C/D=1-586"/>
</dbReference>
<dbReference type="PDB" id="6V8Q">
    <property type="method" value="X-ray"/>
    <property type="resolution" value="2.70 A"/>
    <property type="chains" value="A/B=1-586"/>
</dbReference>
<dbReference type="PDB" id="6VAT">
    <property type="method" value="X-ray"/>
    <property type="resolution" value="2.35 A"/>
    <property type="chains" value="A/B/C/D/E/F=241-586"/>
</dbReference>
<dbReference type="PDB" id="6VC7">
    <property type="method" value="X-ray"/>
    <property type="resolution" value="2.05 A"/>
    <property type="chains" value="A/B/C/D/E/F=241-586"/>
</dbReference>
<dbReference type="PDB" id="6VDF">
    <property type="method" value="X-ray"/>
    <property type="resolution" value="1.92 A"/>
    <property type="chains" value="A/B/C/D=241-586"/>
</dbReference>
<dbReference type="PDBsum" id="5I5D"/>
<dbReference type="PDBsum" id="5I5F"/>
<dbReference type="PDBsum" id="6V8Q"/>
<dbReference type="PDBsum" id="6VAT"/>
<dbReference type="PDBsum" id="6VC7"/>
<dbReference type="PDBsum" id="6VDF"/>
<dbReference type="SMR" id="P40709"/>
<dbReference type="STRING" id="99287.STM2228"/>
<dbReference type="PaxDb" id="99287-STM2228"/>
<dbReference type="GeneID" id="1253750"/>
<dbReference type="KEGG" id="stm:STM2228"/>
<dbReference type="PATRIC" id="fig|99287.12.peg.2360"/>
<dbReference type="HOGENOM" id="CLU_030247_1_0_6"/>
<dbReference type="OMA" id="QMLFSRW"/>
<dbReference type="PhylomeDB" id="P40709"/>
<dbReference type="BioCyc" id="SENT99287:STM2228-MONOMER"/>
<dbReference type="Proteomes" id="UP000001014">
    <property type="component" value="Chromosome"/>
</dbReference>
<dbReference type="GO" id="GO:0005886">
    <property type="term" value="C:plasma membrane"/>
    <property type="evidence" value="ECO:0000318"/>
    <property type="project" value="GO_Central"/>
</dbReference>
<dbReference type="DisProt" id="DP02485"/>
<dbReference type="FunFam" id="3.40.720.10:FF:000014">
    <property type="entry name" value="Hydrolase, inner membrane"/>
    <property type="match status" value="1"/>
</dbReference>
<dbReference type="Gene3D" id="3.40.720.10">
    <property type="entry name" value="Alkaline Phosphatase, subunit A"/>
    <property type="match status" value="1"/>
</dbReference>
<dbReference type="InterPro" id="IPR017850">
    <property type="entry name" value="Alkaline_phosphatase_core_sf"/>
</dbReference>
<dbReference type="InterPro" id="IPR000917">
    <property type="entry name" value="Sulfatase_N"/>
</dbReference>
<dbReference type="InterPro" id="IPR012159">
    <property type="entry name" value="YejM-like"/>
</dbReference>
<dbReference type="InterPro" id="IPR047997">
    <property type="entry name" value="YejM_enterobact"/>
</dbReference>
<dbReference type="InterPro" id="IPR024588">
    <property type="entry name" value="YejM_N"/>
</dbReference>
<dbReference type="NCBIfam" id="NF038282">
    <property type="entry name" value="LapC_YejM_PbgA"/>
    <property type="match status" value="1"/>
</dbReference>
<dbReference type="PANTHER" id="PTHR43108:SF10">
    <property type="entry name" value="INNER MEMBRANE PROTEIN YEJM"/>
    <property type="match status" value="1"/>
</dbReference>
<dbReference type="PANTHER" id="PTHR43108">
    <property type="entry name" value="N-ACETYLGLUCOSAMINE-6-SULFATASE FAMILY MEMBER"/>
    <property type="match status" value="1"/>
</dbReference>
<dbReference type="Pfam" id="PF11893">
    <property type="entry name" value="DUF3413"/>
    <property type="match status" value="1"/>
</dbReference>
<dbReference type="Pfam" id="PF00884">
    <property type="entry name" value="Sulfatase"/>
    <property type="match status" value="1"/>
</dbReference>
<dbReference type="PIRSF" id="PIRSF004950">
    <property type="entry name" value="Mmb_sulf_HI0842"/>
    <property type="match status" value="1"/>
</dbReference>
<dbReference type="SUPFAM" id="SSF53649">
    <property type="entry name" value="Alkaline phosphatase-like"/>
    <property type="match status" value="1"/>
</dbReference>
<evidence type="ECO:0000250" key="1"/>
<evidence type="ECO:0000255" key="2"/>
<evidence type="ECO:0000305" key="3"/>
<evidence type="ECO:0007829" key="4">
    <source>
        <dbReference type="PDB" id="5I5D"/>
    </source>
</evidence>
<evidence type="ECO:0007829" key="5">
    <source>
        <dbReference type="PDB" id="6V8Q"/>
    </source>
</evidence>
<evidence type="ECO:0007829" key="6">
    <source>
        <dbReference type="PDB" id="6VDF"/>
    </source>
</evidence>